<reference key="1">
    <citation type="journal article" date="2006" name="PLoS Genet.">
        <title>Genome sequence of Rickettsia bellii illuminates the role of amoebae in gene exchanges between intracellular pathogens.</title>
        <authorList>
            <person name="Ogata H."/>
            <person name="La Scola B."/>
            <person name="Audic S."/>
            <person name="Renesto P."/>
            <person name="Blanc G."/>
            <person name="Robert C."/>
            <person name="Fournier P.-E."/>
            <person name="Claverie J.-M."/>
            <person name="Raoult D."/>
        </authorList>
    </citation>
    <scope>NUCLEOTIDE SEQUENCE [LARGE SCALE GENOMIC DNA]</scope>
    <source>
        <strain>RML369-C</strain>
    </source>
</reference>
<keyword id="KW-0040">ANK repeat</keyword>
<keyword id="KW-0677">Repeat</keyword>
<name>Y589_RICBR</name>
<protein>
    <recommendedName>
        <fullName>Putative ankyrin repeat protein RBE_0589</fullName>
    </recommendedName>
</protein>
<dbReference type="EMBL" id="CP000087">
    <property type="protein sequence ID" value="ABE04670.1"/>
    <property type="molecule type" value="Genomic_DNA"/>
</dbReference>
<dbReference type="RefSeq" id="WP_011477258.1">
    <property type="nucleotide sequence ID" value="NC_007940.1"/>
</dbReference>
<dbReference type="SMR" id="Q1RIZ4"/>
<dbReference type="KEGG" id="rbe:RBE_0589"/>
<dbReference type="eggNOG" id="COG0666">
    <property type="taxonomic scope" value="Bacteria"/>
</dbReference>
<dbReference type="HOGENOM" id="CLU_791975_0_0_5"/>
<dbReference type="OrthoDB" id="7390289at2"/>
<dbReference type="Proteomes" id="UP000001951">
    <property type="component" value="Chromosome"/>
</dbReference>
<dbReference type="Gene3D" id="1.25.40.20">
    <property type="entry name" value="Ankyrin repeat-containing domain"/>
    <property type="match status" value="1"/>
</dbReference>
<dbReference type="InterPro" id="IPR002110">
    <property type="entry name" value="Ankyrin_rpt"/>
</dbReference>
<dbReference type="InterPro" id="IPR036770">
    <property type="entry name" value="Ankyrin_rpt-contain_sf"/>
</dbReference>
<dbReference type="PANTHER" id="PTHR24198">
    <property type="entry name" value="ANKYRIN REPEAT AND PROTEIN KINASE DOMAIN-CONTAINING PROTEIN"/>
    <property type="match status" value="1"/>
</dbReference>
<dbReference type="PANTHER" id="PTHR24198:SF165">
    <property type="entry name" value="ANKYRIN REPEAT-CONTAINING PROTEIN-RELATED"/>
    <property type="match status" value="1"/>
</dbReference>
<dbReference type="Pfam" id="PF00023">
    <property type="entry name" value="Ank"/>
    <property type="match status" value="2"/>
</dbReference>
<dbReference type="SMART" id="SM00248">
    <property type="entry name" value="ANK"/>
    <property type="match status" value="3"/>
</dbReference>
<dbReference type="SUPFAM" id="SSF48403">
    <property type="entry name" value="Ankyrin repeat"/>
    <property type="match status" value="1"/>
</dbReference>
<dbReference type="PROSITE" id="PS50297">
    <property type="entry name" value="ANK_REP_REGION"/>
    <property type="match status" value="1"/>
</dbReference>
<dbReference type="PROSITE" id="PS50088">
    <property type="entry name" value="ANK_REPEAT"/>
    <property type="match status" value="2"/>
</dbReference>
<proteinExistence type="predicted"/>
<accession>Q1RIZ4</accession>
<feature type="chain" id="PRO_0000280914" description="Putative ankyrin repeat protein RBE_0589">
    <location>
        <begin position="1"/>
        <end position="350"/>
    </location>
</feature>
<feature type="repeat" description="ANK 1">
    <location>
        <begin position="81"/>
        <end position="110"/>
    </location>
</feature>
<feature type="repeat" description="ANK 2">
    <location>
        <begin position="114"/>
        <end position="151"/>
    </location>
</feature>
<feature type="repeat" description="ANK 3">
    <location>
        <begin position="153"/>
        <end position="182"/>
    </location>
</feature>
<organism>
    <name type="scientific">Rickettsia bellii (strain RML369-C)</name>
    <dbReference type="NCBI Taxonomy" id="336407"/>
    <lineage>
        <taxon>Bacteria</taxon>
        <taxon>Pseudomonadati</taxon>
        <taxon>Pseudomonadota</taxon>
        <taxon>Alphaproteobacteria</taxon>
        <taxon>Rickettsiales</taxon>
        <taxon>Rickettsiaceae</taxon>
        <taxon>Rickettsieae</taxon>
        <taxon>Rickettsia</taxon>
        <taxon>belli group</taxon>
    </lineage>
</organism>
<sequence length="350" mass="39855">MFNQLSDEQKMLKKLALLSGIKPCTASSMLFSFPYSQQKLIDASTQKLFDLFGKLRNTDRLKFLIEEAIDRGIDIDVQDKDGFTLLHKSINERDYNIAGFLLERKANPNIHDRDIVTPLNRIAGKPLSKTEEDFHMAKLLLQKGALTEPTDFSGWTPIQYAVFNEKIGIVELLIDYGANLDIIVPKGFYKGKNLIELVRAISSIFSDQSLNKQLQTLLKLATACQNNDFGLVDYSVKKENSDTEDDSVTKEDIEKFINHKISIKPSVKLLPKYLKELIRLKGFLETKEEFIKDNTIKRLEDNINSKSSLKYLLLSKIVESPSLYKFDVGMPEDLKESLEEHGLKLVGDID</sequence>
<gene>
    <name type="ordered locus">RBE_0589</name>
</gene>